<accession>Q4L8L9</accession>
<dbReference type="EMBL" id="AP006716">
    <property type="protein sequence ID" value="BAE04006.1"/>
    <property type="molecule type" value="Genomic_DNA"/>
</dbReference>
<dbReference type="RefSeq" id="WP_011275022.1">
    <property type="nucleotide sequence ID" value="NC_007168.1"/>
</dbReference>
<dbReference type="SMR" id="Q4L8L9"/>
<dbReference type="KEGG" id="sha:SH0697"/>
<dbReference type="eggNOG" id="COG0745">
    <property type="taxonomic scope" value="Bacteria"/>
</dbReference>
<dbReference type="HOGENOM" id="CLU_000445_30_3_9"/>
<dbReference type="OrthoDB" id="9790442at2"/>
<dbReference type="Proteomes" id="UP000000543">
    <property type="component" value="Chromosome"/>
</dbReference>
<dbReference type="GO" id="GO:0005829">
    <property type="term" value="C:cytosol"/>
    <property type="evidence" value="ECO:0007669"/>
    <property type="project" value="TreeGrafter"/>
</dbReference>
<dbReference type="GO" id="GO:0032993">
    <property type="term" value="C:protein-DNA complex"/>
    <property type="evidence" value="ECO:0007669"/>
    <property type="project" value="TreeGrafter"/>
</dbReference>
<dbReference type="GO" id="GO:0000156">
    <property type="term" value="F:phosphorelay response regulator activity"/>
    <property type="evidence" value="ECO:0007669"/>
    <property type="project" value="TreeGrafter"/>
</dbReference>
<dbReference type="GO" id="GO:0000976">
    <property type="term" value="F:transcription cis-regulatory region binding"/>
    <property type="evidence" value="ECO:0007669"/>
    <property type="project" value="TreeGrafter"/>
</dbReference>
<dbReference type="GO" id="GO:0006355">
    <property type="term" value="P:regulation of DNA-templated transcription"/>
    <property type="evidence" value="ECO:0007669"/>
    <property type="project" value="InterPro"/>
</dbReference>
<dbReference type="CDD" id="cd17574">
    <property type="entry name" value="REC_OmpR"/>
    <property type="match status" value="1"/>
</dbReference>
<dbReference type="CDD" id="cd00383">
    <property type="entry name" value="trans_reg_C"/>
    <property type="match status" value="1"/>
</dbReference>
<dbReference type="Gene3D" id="3.40.50.2300">
    <property type="match status" value="1"/>
</dbReference>
<dbReference type="Gene3D" id="6.10.250.690">
    <property type="match status" value="1"/>
</dbReference>
<dbReference type="Gene3D" id="1.10.10.10">
    <property type="entry name" value="Winged helix-like DNA-binding domain superfamily/Winged helix DNA-binding domain"/>
    <property type="match status" value="1"/>
</dbReference>
<dbReference type="InterPro" id="IPR011006">
    <property type="entry name" value="CheY-like_superfamily"/>
</dbReference>
<dbReference type="InterPro" id="IPR001867">
    <property type="entry name" value="OmpR/PhoB-type_DNA-bd"/>
</dbReference>
<dbReference type="InterPro" id="IPR001789">
    <property type="entry name" value="Sig_transdc_resp-reg_receiver"/>
</dbReference>
<dbReference type="InterPro" id="IPR039420">
    <property type="entry name" value="WalR-like"/>
</dbReference>
<dbReference type="InterPro" id="IPR036388">
    <property type="entry name" value="WH-like_DNA-bd_sf"/>
</dbReference>
<dbReference type="PANTHER" id="PTHR48111:SF49">
    <property type="entry name" value="HEME RESPONSE REGULATOR HSSR"/>
    <property type="match status" value="1"/>
</dbReference>
<dbReference type="PANTHER" id="PTHR48111">
    <property type="entry name" value="REGULATOR OF RPOS"/>
    <property type="match status" value="1"/>
</dbReference>
<dbReference type="Pfam" id="PF00072">
    <property type="entry name" value="Response_reg"/>
    <property type="match status" value="1"/>
</dbReference>
<dbReference type="Pfam" id="PF00486">
    <property type="entry name" value="Trans_reg_C"/>
    <property type="match status" value="1"/>
</dbReference>
<dbReference type="SMART" id="SM00448">
    <property type="entry name" value="REC"/>
    <property type="match status" value="1"/>
</dbReference>
<dbReference type="SMART" id="SM00862">
    <property type="entry name" value="Trans_reg_C"/>
    <property type="match status" value="1"/>
</dbReference>
<dbReference type="SUPFAM" id="SSF52172">
    <property type="entry name" value="CheY-like"/>
    <property type="match status" value="1"/>
</dbReference>
<dbReference type="PROSITE" id="PS51755">
    <property type="entry name" value="OMPR_PHOB"/>
    <property type="match status" value="1"/>
</dbReference>
<dbReference type="PROSITE" id="PS50110">
    <property type="entry name" value="RESPONSE_REGULATORY"/>
    <property type="match status" value="1"/>
</dbReference>
<protein>
    <recommendedName>
        <fullName>Heme response regulator HssR</fullName>
    </recommendedName>
</protein>
<keyword id="KW-0010">Activator</keyword>
<keyword id="KW-0963">Cytoplasm</keyword>
<keyword id="KW-0238">DNA-binding</keyword>
<keyword id="KW-0597">Phosphoprotein</keyword>
<keyword id="KW-0804">Transcription</keyword>
<keyword id="KW-0805">Transcription regulation</keyword>
<keyword id="KW-0902">Two-component regulatory system</keyword>
<keyword id="KW-0843">Virulence</keyword>
<evidence type="ECO:0000250" key="1"/>
<evidence type="ECO:0000255" key="2">
    <source>
        <dbReference type="PROSITE-ProRule" id="PRU00169"/>
    </source>
</evidence>
<evidence type="ECO:0000255" key="3">
    <source>
        <dbReference type="PROSITE-ProRule" id="PRU01091"/>
    </source>
</evidence>
<evidence type="ECO:0000305" key="4"/>
<reference key="1">
    <citation type="journal article" date="2005" name="J. Bacteriol.">
        <title>Whole-genome sequencing of Staphylococcus haemolyticus uncovers the extreme plasticity of its genome and the evolution of human-colonizing staphylococcal species.</title>
        <authorList>
            <person name="Takeuchi F."/>
            <person name="Watanabe S."/>
            <person name="Baba T."/>
            <person name="Yuzawa H."/>
            <person name="Ito T."/>
            <person name="Morimoto Y."/>
            <person name="Kuroda M."/>
            <person name="Cui L."/>
            <person name="Takahashi M."/>
            <person name="Ankai A."/>
            <person name="Baba S."/>
            <person name="Fukui S."/>
            <person name="Lee J.C."/>
            <person name="Hiramatsu K."/>
        </authorList>
    </citation>
    <scope>NUCLEOTIDE SEQUENCE [LARGE SCALE GENOMIC DNA]</scope>
    <source>
        <strain>JCSC1435</strain>
    </source>
</reference>
<sequence length="224" mass="25823">MVKCLIVDDDYKILHYVSQHLEAAQIQTVTQASGESAIAYLANNKVDIAVVDIMMTGMDGFELCQLLKNDYDLPVIMLTARDALSDKERAFVSGTDDYVTKPFEVKELLFRIQAVLRRYQINSQDIIKLGNVTLIQEYMELSVDSKNVNLPTKEFQLLFLLCGQPKHIFTRDTLIERIWGFDYEGDERTIDVHIKRLRHRLNQLKATIEIQTVRGQGYRVITHV</sequence>
<comment type="function">
    <text evidence="1">Member of the two-component regulatory system HssS/HssR involved in intracellular heme homeostasis and tempering of staphylococcal virulence. Phosphorylated HssR binds to a direct repeat sequence within hrtAB promoter and activates the expression of hrtAB, an efflux pump, in response to extracellular heme, hemin, hemoglobin or blood (By similarity).</text>
</comment>
<comment type="subcellular location">
    <subcellularLocation>
        <location evidence="4">Cytoplasm</location>
    </subcellularLocation>
</comment>
<comment type="PTM">
    <text evidence="1">Phosphorylated by HssS.</text>
</comment>
<name>HSSR_STAHJ</name>
<proteinExistence type="inferred from homology"/>
<gene>
    <name type="primary">hssR</name>
    <name type="ordered locus">SH0697</name>
</gene>
<feature type="chain" id="PRO_0000331335" description="Heme response regulator HssR">
    <location>
        <begin position="1"/>
        <end position="224"/>
    </location>
</feature>
<feature type="domain" description="Response regulatory" evidence="2">
    <location>
        <begin position="3"/>
        <end position="116"/>
    </location>
</feature>
<feature type="DNA-binding region" description="OmpR/PhoB-type" evidence="3">
    <location>
        <begin position="124"/>
        <end position="222"/>
    </location>
</feature>
<feature type="modified residue" description="4-aspartylphosphate" evidence="2">
    <location>
        <position position="52"/>
    </location>
</feature>
<organism>
    <name type="scientific">Staphylococcus haemolyticus (strain JCSC1435)</name>
    <dbReference type="NCBI Taxonomy" id="279808"/>
    <lineage>
        <taxon>Bacteria</taxon>
        <taxon>Bacillati</taxon>
        <taxon>Bacillota</taxon>
        <taxon>Bacilli</taxon>
        <taxon>Bacillales</taxon>
        <taxon>Staphylococcaceae</taxon>
        <taxon>Staphylococcus</taxon>
    </lineage>
</organism>